<organism>
    <name type="scientific">Odorrana hosii</name>
    <name type="common">Hose's rock frog</name>
    <name type="synonym">Rana hosii</name>
    <dbReference type="NCBI Taxonomy" id="310666"/>
    <lineage>
        <taxon>Eukaryota</taxon>
        <taxon>Metazoa</taxon>
        <taxon>Chordata</taxon>
        <taxon>Craniata</taxon>
        <taxon>Vertebrata</taxon>
        <taxon>Euteleostomi</taxon>
        <taxon>Amphibia</taxon>
        <taxon>Batrachia</taxon>
        <taxon>Anura</taxon>
        <taxon>Neobatrachia</taxon>
        <taxon>Ranoidea</taxon>
        <taxon>Ranidae</taxon>
        <taxon>Odorrana</taxon>
    </lineage>
</organism>
<reference key="1">
    <citation type="journal article" date="2008" name="Toxicon">
        <title>Characterization of antimicrobial peptides from the skin secretions of the Malaysian frogs, Odorrana hosii and Hylarana picturata (Anura:Ranidae).</title>
        <authorList>
            <person name="Conlon J.M."/>
            <person name="Kolodziejek J."/>
            <person name="Nowotny N."/>
            <person name="Leprince J."/>
            <person name="Vaudry H."/>
            <person name="Coquet L."/>
            <person name="Jouenne T."/>
            <person name="King J.D."/>
        </authorList>
    </citation>
    <scope>PROTEIN SEQUENCE</scope>
    <scope>FUNCTION</scope>
    <scope>MASS SPECTROMETRY</scope>
    <source>
        <tissue>Skin secretion</tissue>
    </source>
</reference>
<feature type="peptide" id="PRO_0000366035" description="Brevinin-1HSa">
    <location>
        <begin position="1"/>
        <end position="24"/>
    </location>
</feature>
<feature type="disulfide bond">
    <location>
        <begin position="18"/>
        <end position="24"/>
    </location>
</feature>
<protein>
    <recommendedName>
        <fullName>Brevinin-1HSa</fullName>
    </recommendedName>
</protein>
<keyword id="KW-0878">Amphibian defense peptide</keyword>
<keyword id="KW-0044">Antibiotic</keyword>
<keyword id="KW-0929">Antimicrobial</keyword>
<keyword id="KW-0903">Direct protein sequencing</keyword>
<keyword id="KW-1015">Disulfide bond</keyword>
<keyword id="KW-0964">Secreted</keyword>
<accession>P0C8S7</accession>
<sequence>FLPAVLRVAAKIVPTVFCAISKKC</sequence>
<proteinExistence type="evidence at protein level"/>
<dbReference type="GO" id="GO:0005576">
    <property type="term" value="C:extracellular region"/>
    <property type="evidence" value="ECO:0007669"/>
    <property type="project" value="UniProtKB-SubCell"/>
</dbReference>
<dbReference type="GO" id="GO:0042742">
    <property type="term" value="P:defense response to bacterium"/>
    <property type="evidence" value="ECO:0007669"/>
    <property type="project" value="UniProtKB-KW"/>
</dbReference>
<dbReference type="InterPro" id="IPR012520">
    <property type="entry name" value="Antimicrobial_frog_1"/>
</dbReference>
<dbReference type="Pfam" id="PF08018">
    <property type="entry name" value="Antimicrobial_1"/>
    <property type="match status" value="1"/>
</dbReference>
<comment type="function">
    <text evidence="1">Has antibacterial activity against the Gram-positive bacterium S.aureus ATCC 25923 (MIC=3 uM) and the Gram-negative bacterium E.coli ATCC 25726 (MIC=24 uM).</text>
</comment>
<comment type="subcellular location">
    <subcellularLocation>
        <location>Secreted</location>
    </subcellularLocation>
</comment>
<comment type="tissue specificity">
    <text>Expressed by the skin glands.</text>
</comment>
<comment type="mass spectrometry"/>
<comment type="similarity">
    <text evidence="2">Belongs to the frog skin active peptide (FSAP) family. Brevinin subfamily.</text>
</comment>
<name>BR1A_ODOHO</name>
<evidence type="ECO:0000269" key="1">
    <source>
    </source>
</evidence>
<evidence type="ECO:0000305" key="2"/>